<comment type="function">
    <text evidence="4">Component of the endoplasmic reticulum (ER) quality control system called ER-associated degradation (ERAD) and involved in ubiquitin-dependent degradation of misfolded endoplasmic reticulum proteins. Functions as an ERAD substrate-recruiting factor that recognizes misfolded proteins for the HRD1 E3 ubiquitin ligase complex. Targets the misfolded LRR receptor kinase BRI1.</text>
</comment>
<comment type="subunit">
    <text evidence="5 6">Interacts with OS9.</text>
</comment>
<comment type="subcellular location">
    <subcellularLocation>
        <location evidence="8">Endoplasmic reticulum membrane</location>
        <topology evidence="1">Single-pass membrane protein</topology>
    </subcellularLocation>
</comment>
<comment type="similarity">
    <text evidence="8">Belongs to the sel-1 family.</text>
</comment>
<accession>Q9LM25</accession>
<accession>Q94BN9</accession>
<feature type="signal peptide" evidence="1">
    <location>
        <begin position="1"/>
        <end position="25"/>
    </location>
</feature>
<feature type="chain" id="PRO_0000431273" description="ERAD-associated E3 ubiquitin-protein ligase component HRD3A" evidence="1">
    <location>
        <begin position="26"/>
        <end position="678"/>
    </location>
</feature>
<feature type="transmembrane region" description="Helical" evidence="1">
    <location>
        <begin position="620"/>
        <end position="640"/>
    </location>
</feature>
<feature type="repeat" description="Sel1-like 1" evidence="1">
    <location>
        <begin position="124"/>
        <end position="159"/>
    </location>
</feature>
<feature type="repeat" description="Sel1-like 2" evidence="1">
    <location>
        <begin position="242"/>
        <end position="277"/>
    </location>
</feature>
<feature type="repeat" description="Sel1-like 3" evidence="1">
    <location>
        <begin position="279"/>
        <end position="313"/>
    </location>
</feature>
<feature type="repeat" description="Sel1-like 4" evidence="1">
    <location>
        <begin position="317"/>
        <end position="349"/>
    </location>
</feature>
<feature type="repeat" description="Sel1-like 5" evidence="1">
    <location>
        <begin position="353"/>
        <end position="386"/>
    </location>
</feature>
<feature type="repeat" description="Sel1-like 6" evidence="1">
    <location>
        <begin position="388"/>
        <end position="422"/>
    </location>
</feature>
<feature type="repeat" description="Sel1-like 7" evidence="1">
    <location>
        <begin position="506"/>
        <end position="537"/>
    </location>
</feature>
<feature type="repeat" description="Sel1-like 8" evidence="1">
    <location>
        <begin position="540"/>
        <end position="568"/>
    </location>
</feature>
<feature type="region of interest" description="Disordered" evidence="3">
    <location>
        <begin position="40"/>
        <end position="71"/>
    </location>
</feature>
<feature type="glycosylation site" description="N-linked (GlcNAc...) asparagine" evidence="2">
    <location>
        <position position="298"/>
    </location>
</feature>
<feature type="glycosylation site" description="N-linked (GlcNAc...) asparagine" evidence="2">
    <location>
        <position position="335"/>
    </location>
</feature>
<feature type="sequence conflict" description="In Ref. 3; AAK64159." ref="3">
    <original>I</original>
    <variation>N</variation>
    <location>
        <position position="248"/>
    </location>
</feature>
<protein>
    <recommendedName>
        <fullName evidence="8">ERAD-associated E3 ubiquitin-protein ligase component HRD3A</fullName>
    </recommendedName>
    <alternativeName>
        <fullName evidence="7">AtSel1A</fullName>
    </alternativeName>
    <alternativeName>
        <fullName evidence="7">Protein EMS-MUTAGENIZED BRI1 SUPPRESSOR 5</fullName>
    </alternativeName>
</protein>
<organism>
    <name type="scientific">Arabidopsis thaliana</name>
    <name type="common">Mouse-ear cress</name>
    <dbReference type="NCBI Taxonomy" id="3702"/>
    <lineage>
        <taxon>Eukaryota</taxon>
        <taxon>Viridiplantae</taxon>
        <taxon>Streptophyta</taxon>
        <taxon>Embryophyta</taxon>
        <taxon>Tracheophyta</taxon>
        <taxon>Spermatophyta</taxon>
        <taxon>Magnoliopsida</taxon>
        <taxon>eudicotyledons</taxon>
        <taxon>Gunneridae</taxon>
        <taxon>Pentapetalae</taxon>
        <taxon>rosids</taxon>
        <taxon>malvids</taxon>
        <taxon>Brassicales</taxon>
        <taxon>Brassicaceae</taxon>
        <taxon>Camelineae</taxon>
        <taxon>Arabidopsis</taxon>
    </lineage>
</organism>
<evidence type="ECO:0000255" key="1"/>
<evidence type="ECO:0000255" key="2">
    <source>
        <dbReference type="PROSITE-ProRule" id="PRU00498"/>
    </source>
</evidence>
<evidence type="ECO:0000256" key="3">
    <source>
        <dbReference type="SAM" id="MobiDB-lite"/>
    </source>
</evidence>
<evidence type="ECO:0000269" key="4">
    <source>
    </source>
</evidence>
<evidence type="ECO:0000269" key="5">
    <source>
    </source>
</evidence>
<evidence type="ECO:0000269" key="6">
    <source>
    </source>
</evidence>
<evidence type="ECO:0000303" key="7">
    <source>
    </source>
</evidence>
<evidence type="ECO:0000305" key="8"/>
<evidence type="ECO:0000312" key="9">
    <source>
        <dbReference type="Araport" id="AT1G18260"/>
    </source>
</evidence>
<evidence type="ECO:0000312" key="10">
    <source>
        <dbReference type="EMBL" id="AAF78381.1"/>
    </source>
</evidence>
<dbReference type="EMBL" id="AB189471">
    <property type="protein sequence ID" value="BAD42326.1"/>
    <property type="molecule type" value="mRNA"/>
</dbReference>
<dbReference type="EMBL" id="AC069551">
    <property type="protein sequence ID" value="AAF78381.1"/>
    <property type="molecule type" value="Genomic_DNA"/>
</dbReference>
<dbReference type="EMBL" id="CP002684">
    <property type="protein sequence ID" value="AEE29692.1"/>
    <property type="molecule type" value="Genomic_DNA"/>
</dbReference>
<dbReference type="EMBL" id="AY039982">
    <property type="protein sequence ID" value="AAK64159.1"/>
    <property type="molecule type" value="mRNA"/>
</dbReference>
<dbReference type="RefSeq" id="NP_564049.1">
    <property type="nucleotide sequence ID" value="NM_101684.4"/>
</dbReference>
<dbReference type="SMR" id="Q9LM25"/>
<dbReference type="BioGRID" id="23645">
    <property type="interactions" value="3"/>
</dbReference>
<dbReference type="DIP" id="DIP-59592N"/>
<dbReference type="FunCoup" id="Q9LM25">
    <property type="interactions" value="2914"/>
</dbReference>
<dbReference type="IntAct" id="Q9LM25">
    <property type="interactions" value="1"/>
</dbReference>
<dbReference type="STRING" id="3702.Q9LM25"/>
<dbReference type="TCDB" id="3.A.16.1.5">
    <property type="family name" value="the endoplasmic reticular retrotranslocon (er-rt) family"/>
</dbReference>
<dbReference type="GlyCosmos" id="Q9LM25">
    <property type="glycosylation" value="2 sites, No reported glycans"/>
</dbReference>
<dbReference type="GlyGen" id="Q9LM25">
    <property type="glycosylation" value="2 sites"/>
</dbReference>
<dbReference type="PaxDb" id="3702-AT1G18260.1"/>
<dbReference type="ProteomicsDB" id="228747"/>
<dbReference type="EnsemblPlants" id="AT1G18260.1">
    <property type="protein sequence ID" value="AT1G18260.1"/>
    <property type="gene ID" value="AT1G18260"/>
</dbReference>
<dbReference type="GeneID" id="838406"/>
<dbReference type="Gramene" id="AT1G18260.1">
    <property type="protein sequence ID" value="AT1G18260.1"/>
    <property type="gene ID" value="AT1G18260"/>
</dbReference>
<dbReference type="KEGG" id="ath:AT1G18260"/>
<dbReference type="Araport" id="AT1G18260"/>
<dbReference type="TAIR" id="AT1G18260">
    <property type="gene designation" value="EBS5"/>
</dbReference>
<dbReference type="eggNOG" id="KOG1550">
    <property type="taxonomic scope" value="Eukaryota"/>
</dbReference>
<dbReference type="HOGENOM" id="CLU_007931_4_0_1"/>
<dbReference type="InParanoid" id="Q9LM25"/>
<dbReference type="OMA" id="LLGHWMD"/>
<dbReference type="PhylomeDB" id="Q9LM25"/>
<dbReference type="PRO" id="PR:Q9LM25"/>
<dbReference type="Proteomes" id="UP000006548">
    <property type="component" value="Chromosome 1"/>
</dbReference>
<dbReference type="ExpressionAtlas" id="Q9LM25">
    <property type="expression patterns" value="baseline and differential"/>
</dbReference>
<dbReference type="GO" id="GO:0005783">
    <property type="term" value="C:endoplasmic reticulum"/>
    <property type="evidence" value="ECO:0007005"/>
    <property type="project" value="TAIR"/>
</dbReference>
<dbReference type="GO" id="GO:0005789">
    <property type="term" value="C:endoplasmic reticulum membrane"/>
    <property type="evidence" value="ECO:0007669"/>
    <property type="project" value="UniProtKB-SubCell"/>
</dbReference>
<dbReference type="GO" id="GO:0036503">
    <property type="term" value="P:ERAD pathway"/>
    <property type="evidence" value="ECO:0007669"/>
    <property type="project" value="InterPro"/>
</dbReference>
<dbReference type="GO" id="GO:0042538">
    <property type="term" value="P:hyperosmotic salinity response"/>
    <property type="evidence" value="ECO:0000315"/>
    <property type="project" value="TAIR"/>
</dbReference>
<dbReference type="FunFam" id="1.25.40.10:FF:001837">
    <property type="entry name" value="ERAD-associated E3 ubiquitin-protein ligase component HRD3A"/>
    <property type="match status" value="1"/>
</dbReference>
<dbReference type="FunFam" id="1.25.40.10:FF:002396">
    <property type="entry name" value="ERAD-associated E3 ubiquitin-protein ligase component HRD3A"/>
    <property type="match status" value="1"/>
</dbReference>
<dbReference type="Gene3D" id="1.25.40.10">
    <property type="entry name" value="Tetratricopeptide repeat domain"/>
    <property type="match status" value="4"/>
</dbReference>
<dbReference type="InterPro" id="IPR044623">
    <property type="entry name" value="HRD3"/>
</dbReference>
<dbReference type="InterPro" id="IPR006597">
    <property type="entry name" value="Sel1-like"/>
</dbReference>
<dbReference type="InterPro" id="IPR011990">
    <property type="entry name" value="TPR-like_helical_dom_sf"/>
</dbReference>
<dbReference type="PANTHER" id="PTHR45084">
    <property type="entry name" value="ERAD-ASSOCIATED E3 UBIQUITIN-PROTEIN LIGASE COMPONENT HRD3A-RELATED"/>
    <property type="match status" value="1"/>
</dbReference>
<dbReference type="PANTHER" id="PTHR45084:SF1">
    <property type="entry name" value="ERAD-ASSOCIATED E3 UBIQUITIN-PROTEIN LIGASE COMPONENT HRD3A-RELATED"/>
    <property type="match status" value="1"/>
</dbReference>
<dbReference type="Pfam" id="PF08238">
    <property type="entry name" value="Sel1"/>
    <property type="match status" value="8"/>
</dbReference>
<dbReference type="SMART" id="SM00671">
    <property type="entry name" value="SEL1"/>
    <property type="match status" value="8"/>
</dbReference>
<dbReference type="SUPFAM" id="SSF81901">
    <property type="entry name" value="HCP-like"/>
    <property type="match status" value="4"/>
</dbReference>
<proteinExistence type="evidence at protein level"/>
<keyword id="KW-0256">Endoplasmic reticulum</keyword>
<keyword id="KW-0325">Glycoprotein</keyword>
<keyword id="KW-0472">Membrane</keyword>
<keyword id="KW-1185">Reference proteome</keyword>
<keyword id="KW-0677">Repeat</keyword>
<keyword id="KW-0732">Signal</keyword>
<keyword id="KW-0812">Transmembrane</keyword>
<keyword id="KW-1133">Transmembrane helix</keyword>
<name>HRD3A_ARATH</name>
<sequence length="678" mass="75942">MRILSYGIVILSLLVFSFIEFGVHARPVVLVLSNDDLNSGGDDNGVGESSDFDEFGESEPKSEEELDPGSWRSIFEPDDSTVQAASPQYYSGLKKILSAASEGNFRLMEEAVDEIEAASSAGDPHAQSIMGFVYGIGMMREKSKSKSFLHHNFAAAGGNMQSKMALAFTYLRQDMHDKAVQLYAELAETAVNSFLISKDSPVVEPTRIHSGTEENKGALRKSRGEEDEDFQILEYQAQKGNANAMYKIGLFYYFGLRGLRRDHTKALHWFLKAVDKGEPRSMELLGEIYARGAGVERNYTKALEWLTLAAKEGLYSAFNGIGYLYVKGYGVDKKNYTKAREYFEKAVDNEDPSGHYNLGVLYLKGIGVNRDVRQATKYFFVAANAGQPKAFYQLAKMFHTGVGLKKNLEMATSFYKLVAERGPWSSLSRWALEAYLKGDVGKALILYSRMAEMGYEVAQSNAAWILDKYGERSMCMGVSGFCTDKERHERAHSLWWRASEQGNEHAALLIGDAYYYGRGTERDFVRAAEAYMHAKSQSNAQAMFNLGYMHEHGQGLPFDLHLAKRYYDESLQSDAAARLPVTLALASLWLRRNYADTVLVRVVDSLPEVYPKVETWIENVVFEEGNATILTLFVCLITILYLRERQRRQVVVVADPVAADVAQPLDADVAQHLAAFPR</sequence>
<gene>
    <name evidence="8" type="primary">HRD3A</name>
    <name evidence="7" type="synonym">EBS5</name>
    <name evidence="9" type="ordered locus">At1g18260</name>
    <name evidence="10" type="ORF">T10O22.22</name>
</gene>
<reference key="1">
    <citation type="journal article" date="2000" name="Nature">
        <title>Sequence and analysis of chromosome 1 of the plant Arabidopsis thaliana.</title>
        <authorList>
            <person name="Theologis A."/>
            <person name="Ecker J.R."/>
            <person name="Palm C.J."/>
            <person name="Federspiel N.A."/>
            <person name="Kaul S."/>
            <person name="White O."/>
            <person name="Alonso J."/>
            <person name="Altafi H."/>
            <person name="Araujo R."/>
            <person name="Bowman C.L."/>
            <person name="Brooks S.Y."/>
            <person name="Buehler E."/>
            <person name="Chan A."/>
            <person name="Chao Q."/>
            <person name="Chen H."/>
            <person name="Cheuk R.F."/>
            <person name="Chin C.W."/>
            <person name="Chung M.K."/>
            <person name="Conn L."/>
            <person name="Conway A.B."/>
            <person name="Conway A.R."/>
            <person name="Creasy T.H."/>
            <person name="Dewar K."/>
            <person name="Dunn P."/>
            <person name="Etgu P."/>
            <person name="Feldblyum T.V."/>
            <person name="Feng J.-D."/>
            <person name="Fong B."/>
            <person name="Fujii C.Y."/>
            <person name="Gill J.E."/>
            <person name="Goldsmith A.D."/>
            <person name="Haas B."/>
            <person name="Hansen N.F."/>
            <person name="Hughes B."/>
            <person name="Huizar L."/>
            <person name="Hunter J.L."/>
            <person name="Jenkins J."/>
            <person name="Johnson-Hopson C."/>
            <person name="Khan S."/>
            <person name="Khaykin E."/>
            <person name="Kim C.J."/>
            <person name="Koo H.L."/>
            <person name="Kremenetskaia I."/>
            <person name="Kurtz D.B."/>
            <person name="Kwan A."/>
            <person name="Lam B."/>
            <person name="Langin-Hooper S."/>
            <person name="Lee A."/>
            <person name="Lee J.M."/>
            <person name="Lenz C.A."/>
            <person name="Li J.H."/>
            <person name="Li Y.-P."/>
            <person name="Lin X."/>
            <person name="Liu S.X."/>
            <person name="Liu Z.A."/>
            <person name="Luros J.S."/>
            <person name="Maiti R."/>
            <person name="Marziali A."/>
            <person name="Militscher J."/>
            <person name="Miranda M."/>
            <person name="Nguyen M."/>
            <person name="Nierman W.C."/>
            <person name="Osborne B.I."/>
            <person name="Pai G."/>
            <person name="Peterson J."/>
            <person name="Pham P.K."/>
            <person name="Rizzo M."/>
            <person name="Rooney T."/>
            <person name="Rowley D."/>
            <person name="Sakano H."/>
            <person name="Salzberg S.L."/>
            <person name="Schwartz J.R."/>
            <person name="Shinn P."/>
            <person name="Southwick A.M."/>
            <person name="Sun H."/>
            <person name="Tallon L.J."/>
            <person name="Tambunga G."/>
            <person name="Toriumi M.J."/>
            <person name="Town C.D."/>
            <person name="Utterback T."/>
            <person name="Van Aken S."/>
            <person name="Vaysberg M."/>
            <person name="Vysotskaia V.S."/>
            <person name="Walker M."/>
            <person name="Wu D."/>
            <person name="Yu G."/>
            <person name="Fraser C.M."/>
            <person name="Venter J.C."/>
            <person name="Davis R.W."/>
        </authorList>
    </citation>
    <scope>NUCLEOTIDE SEQUENCE [LARGE SCALE GENOMIC DNA]</scope>
    <source>
        <strain>cv. Columbia</strain>
    </source>
</reference>
<reference key="2">
    <citation type="journal article" date="2017" name="Plant J.">
        <title>Araport11: a complete reannotation of the Arabidopsis thaliana reference genome.</title>
        <authorList>
            <person name="Cheng C.Y."/>
            <person name="Krishnakumar V."/>
            <person name="Chan A.P."/>
            <person name="Thibaud-Nissen F."/>
            <person name="Schobel S."/>
            <person name="Town C.D."/>
        </authorList>
    </citation>
    <scope>GENOME REANNOTATION</scope>
    <source>
        <strain>cv. Columbia</strain>
    </source>
</reference>
<reference key="3">
    <citation type="journal article" date="2003" name="Science">
        <title>Empirical analysis of transcriptional activity in the Arabidopsis genome.</title>
        <authorList>
            <person name="Yamada K."/>
            <person name="Lim J."/>
            <person name="Dale J.M."/>
            <person name="Chen H."/>
            <person name="Shinn P."/>
            <person name="Palm C.J."/>
            <person name="Southwick A.M."/>
            <person name="Wu H.C."/>
            <person name="Kim C.J."/>
            <person name="Nguyen M."/>
            <person name="Pham P.K."/>
            <person name="Cheuk R.F."/>
            <person name="Karlin-Newmann G."/>
            <person name="Liu S.X."/>
            <person name="Lam B."/>
            <person name="Sakano H."/>
            <person name="Wu T."/>
            <person name="Yu G."/>
            <person name="Miranda M."/>
            <person name="Quach H.L."/>
            <person name="Tripp M."/>
            <person name="Chang C.H."/>
            <person name="Lee J.M."/>
            <person name="Toriumi M.J."/>
            <person name="Chan M.M."/>
            <person name="Tang C.C."/>
            <person name="Onodera C.S."/>
            <person name="Deng J.M."/>
            <person name="Akiyama K."/>
            <person name="Ansari Y."/>
            <person name="Arakawa T."/>
            <person name="Banh J."/>
            <person name="Banno F."/>
            <person name="Bowser L."/>
            <person name="Brooks S.Y."/>
            <person name="Carninci P."/>
            <person name="Chao Q."/>
            <person name="Choy N."/>
            <person name="Enju A."/>
            <person name="Goldsmith A.D."/>
            <person name="Gurjal M."/>
            <person name="Hansen N.F."/>
            <person name="Hayashizaki Y."/>
            <person name="Johnson-Hopson C."/>
            <person name="Hsuan V.W."/>
            <person name="Iida K."/>
            <person name="Karnes M."/>
            <person name="Khan S."/>
            <person name="Koesema E."/>
            <person name="Ishida J."/>
            <person name="Jiang P.X."/>
            <person name="Jones T."/>
            <person name="Kawai J."/>
            <person name="Kamiya A."/>
            <person name="Meyers C."/>
            <person name="Nakajima M."/>
            <person name="Narusaka M."/>
            <person name="Seki M."/>
            <person name="Sakurai T."/>
            <person name="Satou M."/>
            <person name="Tamse R."/>
            <person name="Vaysberg M."/>
            <person name="Wallender E.K."/>
            <person name="Wong C."/>
            <person name="Yamamura Y."/>
            <person name="Yuan S."/>
            <person name="Shinozaki K."/>
            <person name="Davis R.W."/>
            <person name="Theologis A."/>
            <person name="Ecker J.R."/>
        </authorList>
    </citation>
    <scope>NUCLEOTIDE SEQUENCE [LARGE SCALE MRNA]</scope>
    <source>
        <strain>cv. Columbia</strain>
    </source>
</reference>
<reference key="4">
    <citation type="journal article" date="2011" name="Proc. Natl. Acad. Sci. U.S.A.">
        <title>Conserved endoplasmic reticulum-associated degradation system to eliminate mutated receptor-like kinases in Arabidopsis.</title>
        <authorList>
            <person name="Su W."/>
            <person name="Liu Y."/>
            <person name="Xia Y."/>
            <person name="Hong Z."/>
            <person name="Li J."/>
        </authorList>
    </citation>
    <scope>FUNCTION</scope>
</reference>
<reference key="5">
    <citation type="journal article" date="2012" name="Mol. Plant">
        <title>The Arabidopsis homolog of the mammalian OS-9 protein plays a key role in the endoplasmic reticulum-associated degradation of misfolded receptor-like kinases.</title>
        <authorList>
            <person name="Su W."/>
            <person name="Liu Y."/>
            <person name="Xia Y."/>
            <person name="Hong Z."/>
            <person name="Li J."/>
        </authorList>
    </citation>
    <scope>INTERACTION WITH OS9</scope>
</reference>
<reference key="6">
    <citation type="journal article" date="2012" name="Plant Mol. Biol.">
        <title>Unraveling the function of Arabidopsis thaliana OS9 in the endoplasmic reticulum-associated degradation of glycoproteins.</title>
        <authorList>
            <person name="Huttner S."/>
            <person name="Veit C."/>
            <person name="Schoberer J."/>
            <person name="Grass J."/>
            <person name="Strasser R."/>
        </authorList>
    </citation>
    <scope>INTERACTION WITH OS9</scope>
</reference>